<reference key="1">
    <citation type="journal article" date="2005" name="J. Bacteriol.">
        <title>The genome of Sulfolobus acidocaldarius, a model organism of the Crenarchaeota.</title>
        <authorList>
            <person name="Chen L."/>
            <person name="Bruegger K."/>
            <person name="Skovgaard M."/>
            <person name="Redder P."/>
            <person name="She Q."/>
            <person name="Torarinsson E."/>
            <person name="Greve B."/>
            <person name="Awayez M."/>
            <person name="Zibat A."/>
            <person name="Klenk H.-P."/>
            <person name="Garrett R.A."/>
        </authorList>
    </citation>
    <scope>NUCLEOTIDE SEQUENCE [LARGE SCALE GENOMIC DNA]</scope>
    <source>
        <strain>ATCC 33909 / DSM 639 / JCM 8929 / NBRC 15157 / NCIMB 11770</strain>
    </source>
</reference>
<sequence length="103" mass="11841">MVARSKGYRSKTRKLLEKKVREKGAIPKLSLLMHDYSQGEYVVVKINPSIHKGMPHRRYHGKVGLVVGKRGKAYEVKVNIGDKERVLIVRPEHLIPFNGIQKR</sequence>
<comment type="similarity">
    <text evidence="1">Belongs to the eukaryotic ribosomal protein eL21 family.</text>
</comment>
<accession>Q4JB11</accession>
<name>RL21_SULAC</name>
<proteinExistence type="evidence at protein level"/>
<organism>
    <name type="scientific">Sulfolobus acidocaldarius (strain ATCC 33909 / DSM 639 / JCM 8929 / NBRC 15157 / NCIMB 11770)</name>
    <dbReference type="NCBI Taxonomy" id="330779"/>
    <lineage>
        <taxon>Archaea</taxon>
        <taxon>Thermoproteota</taxon>
        <taxon>Thermoprotei</taxon>
        <taxon>Sulfolobales</taxon>
        <taxon>Sulfolobaceae</taxon>
        <taxon>Sulfolobus</taxon>
    </lineage>
</organism>
<dbReference type="EMBL" id="CP000077">
    <property type="protein sequence ID" value="AAY80018.1"/>
    <property type="molecule type" value="Genomic_DNA"/>
</dbReference>
<dbReference type="RefSeq" id="WP_011277520.1">
    <property type="nucleotide sequence ID" value="NC_007181.1"/>
</dbReference>
<dbReference type="PDB" id="8HKU">
    <property type="method" value="EM"/>
    <property type="resolution" value="2.72 A"/>
    <property type="chains" value="L21E=2-98"/>
</dbReference>
<dbReference type="PDB" id="8HKV">
    <property type="method" value="EM"/>
    <property type="resolution" value="4.94 A"/>
    <property type="chains" value="L21E=2-98"/>
</dbReference>
<dbReference type="PDB" id="8HKY">
    <property type="method" value="EM"/>
    <property type="resolution" value="4.45 A"/>
    <property type="chains" value="L21E=2-98"/>
</dbReference>
<dbReference type="PDB" id="8HKZ">
    <property type="method" value="EM"/>
    <property type="resolution" value="4.78 A"/>
    <property type="chains" value="L21E=2-98"/>
</dbReference>
<dbReference type="PDB" id="8HL1">
    <property type="method" value="EM"/>
    <property type="resolution" value="3.93 A"/>
    <property type="chains" value="L21E=2-98"/>
</dbReference>
<dbReference type="PDB" id="8HL2">
    <property type="method" value="EM"/>
    <property type="resolution" value="4.10 A"/>
    <property type="chains" value="L21E=2-98"/>
</dbReference>
<dbReference type="PDB" id="8HL3">
    <property type="method" value="EM"/>
    <property type="resolution" value="4.80 A"/>
    <property type="chains" value="L21E=2-98"/>
</dbReference>
<dbReference type="PDB" id="8HL4">
    <property type="method" value="EM"/>
    <property type="resolution" value="4.62 A"/>
    <property type="chains" value="L21E=2-98"/>
</dbReference>
<dbReference type="PDB" id="8HL5">
    <property type="method" value="EM"/>
    <property type="resolution" value="5.72 A"/>
    <property type="chains" value="L21E=2-98"/>
</dbReference>
<dbReference type="PDBsum" id="8HKU"/>
<dbReference type="PDBsum" id="8HKV"/>
<dbReference type="PDBsum" id="8HKY"/>
<dbReference type="PDBsum" id="8HKZ"/>
<dbReference type="PDBsum" id="8HL1"/>
<dbReference type="PDBsum" id="8HL2"/>
<dbReference type="PDBsum" id="8HL3"/>
<dbReference type="PDBsum" id="8HL4"/>
<dbReference type="PDBsum" id="8HL5"/>
<dbReference type="EMDB" id="EMD-34860"/>
<dbReference type="EMDB" id="EMD-34861"/>
<dbReference type="EMDB" id="EMD-34863"/>
<dbReference type="EMDB" id="EMD-34864"/>
<dbReference type="EMDB" id="EMD-34866"/>
<dbReference type="EMDB" id="EMD-34867"/>
<dbReference type="EMDB" id="EMD-34868"/>
<dbReference type="EMDB" id="EMD-34869"/>
<dbReference type="EMDB" id="EMD-34870"/>
<dbReference type="SMR" id="Q4JB11"/>
<dbReference type="STRING" id="330779.Saci_0626"/>
<dbReference type="GeneID" id="14551147"/>
<dbReference type="KEGG" id="sai:Saci_0626"/>
<dbReference type="PATRIC" id="fig|330779.12.peg.605"/>
<dbReference type="eggNOG" id="arCOG04129">
    <property type="taxonomic scope" value="Archaea"/>
</dbReference>
<dbReference type="HOGENOM" id="CLU_103610_1_1_2"/>
<dbReference type="Proteomes" id="UP000001018">
    <property type="component" value="Chromosome"/>
</dbReference>
<dbReference type="GO" id="GO:1990904">
    <property type="term" value="C:ribonucleoprotein complex"/>
    <property type="evidence" value="ECO:0007669"/>
    <property type="project" value="UniProtKB-KW"/>
</dbReference>
<dbReference type="GO" id="GO:0005840">
    <property type="term" value="C:ribosome"/>
    <property type="evidence" value="ECO:0007669"/>
    <property type="project" value="UniProtKB-KW"/>
</dbReference>
<dbReference type="GO" id="GO:0003735">
    <property type="term" value="F:structural constituent of ribosome"/>
    <property type="evidence" value="ECO:0007669"/>
    <property type="project" value="InterPro"/>
</dbReference>
<dbReference type="GO" id="GO:0006412">
    <property type="term" value="P:translation"/>
    <property type="evidence" value="ECO:0007669"/>
    <property type="project" value="UniProtKB-UniRule"/>
</dbReference>
<dbReference type="FunFam" id="2.30.30.70:FF:000001">
    <property type="entry name" value="60S ribosomal protein L21"/>
    <property type="match status" value="1"/>
</dbReference>
<dbReference type="Gene3D" id="2.30.30.70">
    <property type="entry name" value="Ribosomal protein L21"/>
    <property type="match status" value="1"/>
</dbReference>
<dbReference type="HAMAP" id="MF_00369">
    <property type="entry name" value="Ribosomal_eL21"/>
    <property type="match status" value="1"/>
</dbReference>
<dbReference type="InterPro" id="IPR001147">
    <property type="entry name" value="Ribosomal_eL21"/>
</dbReference>
<dbReference type="InterPro" id="IPR022856">
    <property type="entry name" value="Ribosomal_eL21_arc"/>
</dbReference>
<dbReference type="InterPro" id="IPR018259">
    <property type="entry name" value="Ribosomal_eL21_CS"/>
</dbReference>
<dbReference type="InterPro" id="IPR036948">
    <property type="entry name" value="Ribosomal_eL21_sf"/>
</dbReference>
<dbReference type="InterPro" id="IPR008991">
    <property type="entry name" value="Translation_prot_SH3-like_sf"/>
</dbReference>
<dbReference type="NCBIfam" id="NF003303">
    <property type="entry name" value="PRK04306.1"/>
    <property type="match status" value="1"/>
</dbReference>
<dbReference type="PANTHER" id="PTHR20981">
    <property type="entry name" value="60S RIBOSOMAL PROTEIN L21"/>
    <property type="match status" value="1"/>
</dbReference>
<dbReference type="Pfam" id="PF01157">
    <property type="entry name" value="Ribosomal_L21e"/>
    <property type="match status" value="1"/>
</dbReference>
<dbReference type="SUPFAM" id="SSF50104">
    <property type="entry name" value="Translation proteins SH3-like domain"/>
    <property type="match status" value="1"/>
</dbReference>
<dbReference type="PROSITE" id="PS01171">
    <property type="entry name" value="RIBOSOMAL_L21E"/>
    <property type="match status" value="1"/>
</dbReference>
<protein>
    <recommendedName>
        <fullName evidence="1">Large ribosomal subunit protein eL21</fullName>
    </recommendedName>
    <alternativeName>
        <fullName evidence="2">50S ribosomal protein L21e</fullName>
    </alternativeName>
</protein>
<evidence type="ECO:0000255" key="1">
    <source>
        <dbReference type="HAMAP-Rule" id="MF_00369"/>
    </source>
</evidence>
<evidence type="ECO:0000305" key="2"/>
<keyword id="KW-0002">3D-structure</keyword>
<keyword id="KW-1185">Reference proteome</keyword>
<keyword id="KW-0687">Ribonucleoprotein</keyword>
<keyword id="KW-0689">Ribosomal protein</keyword>
<feature type="chain" id="PRO_0000149701" description="Large ribosomal subunit protein eL21">
    <location>
        <begin position="1"/>
        <end position="103"/>
    </location>
</feature>
<gene>
    <name evidence="1" type="primary">rpl21e</name>
    <name type="ordered locus">Saci_0626</name>
</gene>